<comment type="function">
    <text evidence="3 4">Inactive phosphatase which acts redundantly with egg-5 in the oocyte-to-zygote transition (PubMed:19879147, PubMed:19879842). Required for the polarization of cortical actin cytoskeleton rearrangement in the oocyte before and after fertilization (PubMed:19879147). Together with egg-5, required for the cortical localization of kinase mbk-2 and for the inhibition of mbk-2 kinase activity in maturing oocyte until the end of meiosis I (PubMed:19879842). Also required for kinase mbk-2, pseudophosphatase egg-3 and chitin synthase chs-1 localization to cytoplasmic foci after fertilization (PubMed:19879147).</text>
</comment>
<comment type="subunit">
    <text evidence="3 4">Part of a complex, consisting of pseudophosphatases egg-3, egg-4, egg-5 and kinase mbk-2; this complex is required for the oocyte-to-zygote transition (PubMed:19879842). Interacts (via tyrosine-protein phosphatase domain) with kinase mbk-2 (via 'Tyr-619' and 'Tyr-621'); mbk-2 tyrosine phosphorylation enhances the interaction (PubMed:19879842). The interaction inhibits mbk-2 kinase activity and is required for mbk-2 oocyte cortex localization (PubMed:19879147, PubMed:19879842). Interacts with egg-3 (PubMed:19879147).</text>
</comment>
<comment type="subcellular location">
    <subcellularLocation>
        <location evidence="3">Cytoplasm</location>
        <location evidence="3">Cell cortex</location>
    </subcellularLocation>
    <text evidence="3">Co-localizes with egg-3 to the cell cortex in developing oocytes and in newly fertilized embryos; cortical localization requires egg-3 and chitin synthase chs-1. At the beginning of meiosis anaphase I, egg-4 moves away from the cell cortex and is likely degraded.</text>
</comment>
<comment type="developmental stage">
    <text evidence="3">Expressed in developing oocytes (at protein level).</text>
</comment>
<comment type="disruption phenotype">
    <text evidence="3 4">Severe reduction in the number of hatched larvae (PubMed:19879147). Simultaneous RNAi-mediated knockdown of egg-5 results in no viable progeny and causes endomitosis in the uterus, generation of polyspermic embryos and defects in meiosis completion, polar body formation and eggshell chitin layer formation (PubMed:19879147). In addition, posterior formation of F-actin cap at the cortex oocyte and its polarized dispersal after fertilization are impaired (PubMed:19879147). Prevents mbk-2 localization to the unfertilized oocyte cortex without affecting egg-3 cortical localization (PubMed:19879147, PubMed:19879842). Prevents mbk-2, egg-3 and chs-1 re-localization to cytoplasmic foci at meiosis anaphase I (PubMed:19879147). Simultaneous RNAi-mediated knockdown of egg-5 and mel-26 causes premature phosphorylation of mei-1, a mbk-1 substrate, during oocyte maturation (PubMed:19879842).</text>
</comment>
<comment type="similarity">
    <text evidence="6">Belongs to the protein-tyrosine phosphatase family.</text>
</comment>
<comment type="caution">
    <text evidence="4 6">The active site Cys-600 is replaced by a Asp residue suggesting that egg-4 may lack catalytic activity. Despite the lack of catalytic activity, egg-4 may retain the capacity to bind to phosphorylated substrates. Does not dephosphorylate mbk-2 (PubMed:19879842).</text>
</comment>
<accession>O01767</accession>
<sequence>MALNSEVMFREQINAMRSQAGRKRATSLQSFCSGNTDDSSADSTDNMDMMVDYPQQKGVSCMRARFNSESTLSKSFRKKVKKLAQKDRRSKERLNGNSEEDAIEVPRGAPSTYAAPSKLRKSKALDCLVSEKPKDEGRREDSGHGADIEMAKGHFNNVRMKVFAARTAMQVEPALVMKTRKALEMKNAVLENHQSPGAFSLHAAYKIAASAESRVGSITPCNKKVTKEAMANLIRSSYDDTEITQELLFSSKFDTKWKGRYTDIYMRRDENGKKPKRPVNGQGWVMPLKSICEKFGINSTFFTNHRIDLKSARDQVLLMRLLSHDQTSTWISDIHPEAVKNETMAEYLLRELDASTMQKRVQAFKANVLADRDRVRVAGQFYNNIRIGKRMFGAARKAKYLSTIIGGMERRFEILENSVNHIPFTHSASDNNQEKCRNPRVHCKDSTRIALQFPRGQYLGDFIHANRISGKPLFNEFIMTQAPMKNTVDDFWRMVWQEEVPYIVMLTSRKEPERCEYYWPKSPSDPAVTVPGGLRIENFGVYQAPDPLFRVTHLRLIGPDREERHVEHWQGDVNNSSNMYSPLNILRLLRNASKPVVIHDHLGVSRAACLVAAEIAICSLLRGPTYKYPVQRAVQFLRQRRPFSIETPMQYIFVHRLVAFFFRDVIGSAKELDVDYERWLQERSERMFLDDLAAPIPGYRLLSPRADPDIVRMVGRPERPNYRREAPDCVGEMPNKVATVDGILSPAKSVFEF</sequence>
<protein>
    <recommendedName>
        <fullName evidence="6">Inactive protein-tyrosine phosphatase egg-4</fullName>
    </recommendedName>
    <alternativeName>
        <fullName evidence="8">Egg sterile protein 4</fullName>
    </alternativeName>
    <alternativeName>
        <fullName evidence="5">Protein-tyrosine phosphatase-like protein egg-4</fullName>
    </alternativeName>
</protein>
<evidence type="ECO:0000255" key="1">
    <source>
        <dbReference type="PROSITE-ProRule" id="PRU00160"/>
    </source>
</evidence>
<evidence type="ECO:0000256" key="2">
    <source>
        <dbReference type="SAM" id="MobiDB-lite"/>
    </source>
</evidence>
<evidence type="ECO:0000269" key="3">
    <source>
    </source>
</evidence>
<evidence type="ECO:0000269" key="4">
    <source>
    </source>
</evidence>
<evidence type="ECO:0000303" key="5">
    <source>
    </source>
</evidence>
<evidence type="ECO:0000305" key="6"/>
<evidence type="ECO:0000312" key="7">
    <source>
        <dbReference type="Proteomes" id="UP000001940"/>
    </source>
</evidence>
<evidence type="ECO:0000312" key="8">
    <source>
        <dbReference type="WormBase" id="T21E3.1"/>
    </source>
</evidence>
<feature type="chain" id="PRO_0000443251" description="Inactive protein-tyrosine phosphatase egg-4">
    <location>
        <begin position="1"/>
        <end position="753"/>
    </location>
</feature>
<feature type="domain" description="Tyrosine-protein phosphatase" evidence="1">
    <location>
        <begin position="408"/>
        <end position="661"/>
    </location>
</feature>
<feature type="region of interest" description="Disordered" evidence="2">
    <location>
        <begin position="26"/>
        <end position="46"/>
    </location>
</feature>
<feature type="region of interest" description="Disordered" evidence="2">
    <location>
        <begin position="75"/>
        <end position="145"/>
    </location>
</feature>
<feature type="compositionally biased region" description="Low complexity" evidence="2">
    <location>
        <begin position="35"/>
        <end position="46"/>
    </location>
</feature>
<feature type="compositionally biased region" description="Basic and acidic residues" evidence="2">
    <location>
        <begin position="84"/>
        <end position="94"/>
    </location>
</feature>
<feature type="compositionally biased region" description="Basic and acidic residues" evidence="2">
    <location>
        <begin position="129"/>
        <end position="145"/>
    </location>
</feature>
<feature type="mutagenesis site" description="Strongly reduced interaction with mbk-2; when associated with A-603 and A-606." evidence="4">
    <original>H</original>
    <variation>A</variation>
    <location>
        <position position="599"/>
    </location>
</feature>
<feature type="mutagenesis site" description="Strongly reduced interaction with mbk-2; when associated with A-599 and A-606." evidence="4">
    <original>G</original>
    <variation>A</variation>
    <location>
        <position position="603"/>
    </location>
</feature>
<feature type="mutagenesis site" description="Strongly reduced interaction with mbk-2; when associated with A-599 and A-603." evidence="4">
    <original>R</original>
    <variation>A</variation>
    <location>
        <position position="606"/>
    </location>
</feature>
<gene>
    <name evidence="8" type="primary">egg-4</name>
    <name evidence="8" type="ORF">T21E3.1</name>
</gene>
<proteinExistence type="evidence at protein level"/>
<keyword id="KW-0963">Cytoplasm</keyword>
<keyword id="KW-0217">Developmental protein</keyword>
<keyword id="KW-1185">Reference proteome</keyword>
<reference evidence="7" key="1">
    <citation type="journal article" date="1998" name="Science">
        <title>Genome sequence of the nematode C. elegans: a platform for investigating biology.</title>
        <authorList>
            <consortium name="The C. elegans sequencing consortium"/>
        </authorList>
    </citation>
    <scope>NUCLEOTIDE SEQUENCE [LARGE SCALE GENOMIC DNA]</scope>
    <source>
        <strain evidence="7">Bristol N2</strain>
    </source>
</reference>
<reference evidence="6" key="2">
    <citation type="journal article" date="2009" name="Cell">
        <title>Regulation of MBK-2/DYRK by CDK-1 and the pseudophosphatases EGG-4 and EGG-5 during the oocyte-to-embryo transition.</title>
        <authorList>
            <person name="Cheng K.C."/>
            <person name="Klancer R."/>
            <person name="Singson A."/>
            <person name="Seydoux G."/>
        </authorList>
    </citation>
    <scope>FUNCTION</scope>
    <scope>LACK OF PHOSPHATASE ACTIVITY</scope>
    <scope>IDENTIFICATION IN A COMPLEX WITH MBK-2; EGG-3 AND EGG-5</scope>
    <scope>INTERACTION WITH MBK-2</scope>
    <scope>DISRUPTION PHENOTYPE</scope>
    <scope>MUTAGENESIS OF HIS-599; GLY-603 AND ARG-606</scope>
</reference>
<reference evidence="6" key="3">
    <citation type="journal article" date="2009" name="Curr. Biol.">
        <title>EGG-4 and EGG-5 Link Events of the Oocyte-to-Embryo Transition with Meiotic Progression in C. elegans.</title>
        <authorList>
            <person name="Parry J.M."/>
            <person name="Velarde N.V."/>
            <person name="Lefkovith A.J."/>
            <person name="Zegarek M.H."/>
            <person name="Hang J.S."/>
            <person name="Ohm J."/>
            <person name="Klancer R."/>
            <person name="Maruyama R."/>
            <person name="Druzhinina M.K."/>
            <person name="Grant B.D."/>
            <person name="Piano F."/>
            <person name="Singson A."/>
        </authorList>
    </citation>
    <scope>FUNCTION</scope>
    <scope>INTERACTION WITH EGG-3 AND MBK-2</scope>
    <scope>SUBCELLULAR LOCATION</scope>
    <scope>DEVELOPMENTAL STAGE</scope>
    <scope>DISRUPTION PHENOTYPE</scope>
</reference>
<name>EGG4_CAEEL</name>
<organism evidence="7">
    <name type="scientific">Caenorhabditis elegans</name>
    <dbReference type="NCBI Taxonomy" id="6239"/>
    <lineage>
        <taxon>Eukaryota</taxon>
        <taxon>Metazoa</taxon>
        <taxon>Ecdysozoa</taxon>
        <taxon>Nematoda</taxon>
        <taxon>Chromadorea</taxon>
        <taxon>Rhabditida</taxon>
        <taxon>Rhabditina</taxon>
        <taxon>Rhabditomorpha</taxon>
        <taxon>Rhabditoidea</taxon>
        <taxon>Rhabditidae</taxon>
        <taxon>Peloderinae</taxon>
        <taxon>Caenorhabditis</taxon>
    </lineage>
</organism>
<dbReference type="EMBL" id="BX284601">
    <property type="protein sequence ID" value="CCD71367.1"/>
    <property type="molecule type" value="Genomic_DNA"/>
</dbReference>
<dbReference type="PIR" id="T29763">
    <property type="entry name" value="T29763"/>
</dbReference>
<dbReference type="RefSeq" id="NP_491269.1">
    <property type="nucleotide sequence ID" value="NM_058868.8"/>
</dbReference>
<dbReference type="SMR" id="O01767"/>
<dbReference type="ComplexPortal" id="CPX-3381">
    <property type="entry name" value="Egg-3/4/5 MBK-2 complex"/>
</dbReference>
<dbReference type="FunCoup" id="O01767">
    <property type="interactions" value="142"/>
</dbReference>
<dbReference type="IntAct" id="O01767">
    <property type="interactions" value="2"/>
</dbReference>
<dbReference type="STRING" id="6239.T21E3.1.1"/>
<dbReference type="PaxDb" id="6239-T21E3.1"/>
<dbReference type="PeptideAtlas" id="O01767"/>
<dbReference type="EnsemblMetazoa" id="T21E3.1.1">
    <property type="protein sequence ID" value="T21E3.1.1"/>
    <property type="gene ID" value="WBGene00020652"/>
</dbReference>
<dbReference type="GeneID" id="171980"/>
<dbReference type="KEGG" id="cel:CELE_T21E3.1"/>
<dbReference type="UCSC" id="T21E3.1">
    <property type="organism name" value="c. elegans"/>
</dbReference>
<dbReference type="AGR" id="WB:WBGene00020652"/>
<dbReference type="CTD" id="171980"/>
<dbReference type="WormBase" id="T21E3.1">
    <property type="protein sequence ID" value="CE13874"/>
    <property type="gene ID" value="WBGene00020652"/>
    <property type="gene designation" value="egg-4"/>
</dbReference>
<dbReference type="eggNOG" id="KOG0789">
    <property type="taxonomic scope" value="Eukaryota"/>
</dbReference>
<dbReference type="GeneTree" id="ENSGT00970000196671"/>
<dbReference type="HOGENOM" id="CLU_370166_0_0_1"/>
<dbReference type="InParanoid" id="O01767"/>
<dbReference type="OMA" id="FNNVRMK"/>
<dbReference type="OrthoDB" id="5867707at2759"/>
<dbReference type="PRO" id="PR:O01767"/>
<dbReference type="Proteomes" id="UP000001940">
    <property type="component" value="Chromosome I"/>
</dbReference>
<dbReference type="Bgee" id="WBGene00020652">
    <property type="expression patterns" value="Expressed in adult organism and 4 other cell types or tissues"/>
</dbReference>
<dbReference type="GO" id="GO:0005938">
    <property type="term" value="C:cell cortex"/>
    <property type="evidence" value="ECO:0000314"/>
    <property type="project" value="UniProtKB"/>
</dbReference>
<dbReference type="GO" id="GO:0005634">
    <property type="term" value="C:nucleus"/>
    <property type="evidence" value="ECO:0000314"/>
    <property type="project" value="WormBase"/>
</dbReference>
<dbReference type="GO" id="GO:0019901">
    <property type="term" value="F:protein kinase binding"/>
    <property type="evidence" value="ECO:0000353"/>
    <property type="project" value="UniProtKB"/>
</dbReference>
<dbReference type="GO" id="GO:0004860">
    <property type="term" value="F:protein kinase inhibitor activity"/>
    <property type="evidence" value="ECO:0000314"/>
    <property type="project" value="WormBase"/>
</dbReference>
<dbReference type="GO" id="GO:0004725">
    <property type="term" value="F:protein tyrosine phosphatase activity"/>
    <property type="evidence" value="ECO:0000318"/>
    <property type="project" value="GO_Central"/>
</dbReference>
<dbReference type="GO" id="GO:0030866">
    <property type="term" value="P:cortical actin cytoskeleton organization"/>
    <property type="evidence" value="ECO:0000316"/>
    <property type="project" value="UniProtKB"/>
</dbReference>
<dbReference type="GO" id="GO:0030703">
    <property type="term" value="P:eggshell formation"/>
    <property type="evidence" value="ECO:0000316"/>
    <property type="project" value="UniProtKB"/>
</dbReference>
<dbReference type="GO" id="GO:0001556">
    <property type="term" value="P:oocyte maturation"/>
    <property type="evidence" value="ECO:0000303"/>
    <property type="project" value="ComplexPortal"/>
</dbReference>
<dbReference type="GO" id="GO:0040038">
    <property type="term" value="P:polar body extrusion after meiotic divisions"/>
    <property type="evidence" value="ECO:0000316"/>
    <property type="project" value="UniProtKB"/>
</dbReference>
<dbReference type="GO" id="GO:1904778">
    <property type="term" value="P:positive regulation of protein localization to cell cortex"/>
    <property type="evidence" value="ECO:0000316"/>
    <property type="project" value="UniProtKB"/>
</dbReference>
<dbReference type="GO" id="GO:0007165">
    <property type="term" value="P:signal transduction"/>
    <property type="evidence" value="ECO:0000318"/>
    <property type="project" value="GO_Central"/>
</dbReference>
<dbReference type="CDD" id="cd00047">
    <property type="entry name" value="PTPc"/>
    <property type="match status" value="1"/>
</dbReference>
<dbReference type="Gene3D" id="3.90.190.10">
    <property type="entry name" value="Protein tyrosine phosphatase superfamily"/>
    <property type="match status" value="1"/>
</dbReference>
<dbReference type="InterPro" id="IPR052782">
    <property type="entry name" value="Oocyte-zygote_transition_reg"/>
</dbReference>
<dbReference type="InterPro" id="IPR029021">
    <property type="entry name" value="Prot-tyrosine_phosphatase-like"/>
</dbReference>
<dbReference type="InterPro" id="IPR000242">
    <property type="entry name" value="PTP_cat"/>
</dbReference>
<dbReference type="InterPro" id="IPR003595">
    <property type="entry name" value="Tyr_Pase_cat"/>
</dbReference>
<dbReference type="InterPro" id="IPR000387">
    <property type="entry name" value="Tyr_Pase_dom"/>
</dbReference>
<dbReference type="PANTHER" id="PTHR46163:SF7">
    <property type="entry name" value="PROTEIN TYROSINE PHOSPHATASE-LIKE PROTEIN EGG-3"/>
    <property type="match status" value="1"/>
</dbReference>
<dbReference type="PANTHER" id="PTHR46163">
    <property type="entry name" value="TYROSINE-PROTEIN PHOSPHATASE-RELATED"/>
    <property type="match status" value="1"/>
</dbReference>
<dbReference type="Pfam" id="PF00102">
    <property type="entry name" value="Y_phosphatase"/>
    <property type="match status" value="1"/>
</dbReference>
<dbReference type="PRINTS" id="PR00700">
    <property type="entry name" value="PRTYPHPHTASE"/>
</dbReference>
<dbReference type="SMART" id="SM00194">
    <property type="entry name" value="PTPc"/>
    <property type="match status" value="1"/>
</dbReference>
<dbReference type="SMART" id="SM00404">
    <property type="entry name" value="PTPc_motif"/>
    <property type="match status" value="1"/>
</dbReference>
<dbReference type="SUPFAM" id="SSF52799">
    <property type="entry name" value="(Phosphotyrosine protein) phosphatases II"/>
    <property type="match status" value="1"/>
</dbReference>
<dbReference type="PROSITE" id="PS50056">
    <property type="entry name" value="TYR_PHOSPHATASE_2"/>
    <property type="match status" value="1"/>
</dbReference>
<dbReference type="PROSITE" id="PS50055">
    <property type="entry name" value="TYR_PHOSPHATASE_PTP"/>
    <property type="match status" value="1"/>
</dbReference>